<keyword id="KW-0963">Cytoplasm</keyword>
<keyword id="KW-0312">Gluconeogenesis</keyword>
<keyword id="KW-0324">Glycolysis</keyword>
<keyword id="KW-0413">Isomerase</keyword>
<keyword id="KW-1185">Reference proteome</keyword>
<protein>
    <recommendedName>
        <fullName evidence="1">Triosephosphate isomerase</fullName>
        <shortName evidence="1">TIM</shortName>
        <shortName evidence="1">TPI</shortName>
        <ecNumber evidence="1">5.3.1.1</ecNumber>
    </recommendedName>
    <alternativeName>
        <fullName evidence="1">Triose-phosphate isomerase</fullName>
    </alternativeName>
</protein>
<accession>Q5FL49</accession>
<evidence type="ECO:0000255" key="1">
    <source>
        <dbReference type="HAMAP-Rule" id="MF_00147"/>
    </source>
</evidence>
<reference key="1">
    <citation type="journal article" date="2005" name="Proc. Natl. Acad. Sci. U.S.A.">
        <title>Complete genome sequence of the probiotic lactic acid bacterium Lactobacillus acidophilus NCFM.</title>
        <authorList>
            <person name="Altermann E."/>
            <person name="Russell W.M."/>
            <person name="Azcarate-Peril M.A."/>
            <person name="Barrangou R."/>
            <person name="Buck B.L."/>
            <person name="McAuliffe O."/>
            <person name="Souther N."/>
            <person name="Dobson A."/>
            <person name="Duong T."/>
            <person name="Callanan M."/>
            <person name="Lick S."/>
            <person name="Hamrick A."/>
            <person name="Cano R."/>
            <person name="Klaenhammer T.R."/>
        </authorList>
    </citation>
    <scope>NUCLEOTIDE SEQUENCE [LARGE SCALE GENOMIC DNA]</scope>
    <source>
        <strain>ATCC 700396 / NCK56 / N2 / NCFM</strain>
    </source>
</reference>
<organism>
    <name type="scientific">Lactobacillus acidophilus (strain ATCC 700396 / NCK56 / N2 / NCFM)</name>
    <dbReference type="NCBI Taxonomy" id="272621"/>
    <lineage>
        <taxon>Bacteria</taxon>
        <taxon>Bacillati</taxon>
        <taxon>Bacillota</taxon>
        <taxon>Bacilli</taxon>
        <taxon>Lactobacillales</taxon>
        <taxon>Lactobacillaceae</taxon>
        <taxon>Lactobacillus</taxon>
    </lineage>
</organism>
<sequence length="252" mass="27502">MSRTPIIAGNWKLHMNPEQTTEFVDAVKGKLPDPSKVESLICAPAVDLDALRKAAEGSNLHIGAENCYFEDEGAYTGETSPKVLKEMGIDYVIIGHSERRGYFHETDEDINKKAKAIFANGMKPIICCGESLETREANKQEDWVVAQIKAALDGLTAEQVSSLVIAYEPIWAIGTGKTASSDQAEEMCKTIRETVKDLYNEETAENVRIQYGGSVKPANVKELMSKPDIDGGLVGGASLDPESFLALVNYQD</sequence>
<name>TPIS_LACAC</name>
<dbReference type="EC" id="5.3.1.1" evidence="1"/>
<dbReference type="EMBL" id="CP000033">
    <property type="protein sequence ID" value="AAV42575.1"/>
    <property type="molecule type" value="Genomic_DNA"/>
</dbReference>
<dbReference type="RefSeq" id="WP_003546605.1">
    <property type="nucleotide sequence ID" value="NC_006814.3"/>
</dbReference>
<dbReference type="RefSeq" id="YP_193606.1">
    <property type="nucleotide sequence ID" value="NC_006814.3"/>
</dbReference>
<dbReference type="SMR" id="Q5FL49"/>
<dbReference type="STRING" id="272621.LBA0700"/>
<dbReference type="GeneID" id="93290172"/>
<dbReference type="KEGG" id="lac:LBA0700"/>
<dbReference type="PATRIC" id="fig|272621.13.peg.670"/>
<dbReference type="eggNOG" id="COG0149">
    <property type="taxonomic scope" value="Bacteria"/>
</dbReference>
<dbReference type="HOGENOM" id="CLU_024251_2_3_9"/>
<dbReference type="OrthoDB" id="9809429at2"/>
<dbReference type="BioCyc" id="LACI272621:G1G49-722-MONOMER"/>
<dbReference type="UniPathway" id="UPA00109">
    <property type="reaction ID" value="UER00189"/>
</dbReference>
<dbReference type="UniPathway" id="UPA00138"/>
<dbReference type="Proteomes" id="UP000006381">
    <property type="component" value="Chromosome"/>
</dbReference>
<dbReference type="GO" id="GO:0005829">
    <property type="term" value="C:cytosol"/>
    <property type="evidence" value="ECO:0007669"/>
    <property type="project" value="TreeGrafter"/>
</dbReference>
<dbReference type="GO" id="GO:0004807">
    <property type="term" value="F:triose-phosphate isomerase activity"/>
    <property type="evidence" value="ECO:0007669"/>
    <property type="project" value="UniProtKB-UniRule"/>
</dbReference>
<dbReference type="GO" id="GO:0006094">
    <property type="term" value="P:gluconeogenesis"/>
    <property type="evidence" value="ECO:0007669"/>
    <property type="project" value="UniProtKB-UniRule"/>
</dbReference>
<dbReference type="GO" id="GO:0046166">
    <property type="term" value="P:glyceraldehyde-3-phosphate biosynthetic process"/>
    <property type="evidence" value="ECO:0007669"/>
    <property type="project" value="TreeGrafter"/>
</dbReference>
<dbReference type="GO" id="GO:0019563">
    <property type="term" value="P:glycerol catabolic process"/>
    <property type="evidence" value="ECO:0007669"/>
    <property type="project" value="TreeGrafter"/>
</dbReference>
<dbReference type="GO" id="GO:0006096">
    <property type="term" value="P:glycolytic process"/>
    <property type="evidence" value="ECO:0007669"/>
    <property type="project" value="UniProtKB-UniRule"/>
</dbReference>
<dbReference type="CDD" id="cd00311">
    <property type="entry name" value="TIM"/>
    <property type="match status" value="1"/>
</dbReference>
<dbReference type="FunFam" id="3.20.20.70:FF:000016">
    <property type="entry name" value="Triosephosphate isomerase"/>
    <property type="match status" value="1"/>
</dbReference>
<dbReference type="Gene3D" id="3.20.20.70">
    <property type="entry name" value="Aldolase class I"/>
    <property type="match status" value="1"/>
</dbReference>
<dbReference type="HAMAP" id="MF_00147_B">
    <property type="entry name" value="TIM_B"/>
    <property type="match status" value="1"/>
</dbReference>
<dbReference type="InterPro" id="IPR013785">
    <property type="entry name" value="Aldolase_TIM"/>
</dbReference>
<dbReference type="InterPro" id="IPR035990">
    <property type="entry name" value="TIM_sf"/>
</dbReference>
<dbReference type="InterPro" id="IPR022896">
    <property type="entry name" value="TrioseP_Isoase_bac/euk"/>
</dbReference>
<dbReference type="InterPro" id="IPR000652">
    <property type="entry name" value="Triosephosphate_isomerase"/>
</dbReference>
<dbReference type="InterPro" id="IPR020861">
    <property type="entry name" value="Triosephosphate_isomerase_AS"/>
</dbReference>
<dbReference type="NCBIfam" id="TIGR00419">
    <property type="entry name" value="tim"/>
    <property type="match status" value="1"/>
</dbReference>
<dbReference type="PANTHER" id="PTHR21139">
    <property type="entry name" value="TRIOSEPHOSPHATE ISOMERASE"/>
    <property type="match status" value="1"/>
</dbReference>
<dbReference type="PANTHER" id="PTHR21139:SF42">
    <property type="entry name" value="TRIOSEPHOSPHATE ISOMERASE"/>
    <property type="match status" value="1"/>
</dbReference>
<dbReference type="Pfam" id="PF00121">
    <property type="entry name" value="TIM"/>
    <property type="match status" value="1"/>
</dbReference>
<dbReference type="SUPFAM" id="SSF51351">
    <property type="entry name" value="Triosephosphate isomerase (TIM)"/>
    <property type="match status" value="1"/>
</dbReference>
<dbReference type="PROSITE" id="PS00171">
    <property type="entry name" value="TIM_1"/>
    <property type="match status" value="1"/>
</dbReference>
<dbReference type="PROSITE" id="PS51440">
    <property type="entry name" value="TIM_2"/>
    <property type="match status" value="1"/>
</dbReference>
<gene>
    <name evidence="1" type="primary">tpiA</name>
    <name type="ordered locus">LBA0700</name>
</gene>
<comment type="function">
    <text evidence="1">Involved in the gluconeogenesis. Catalyzes stereospecifically the conversion of dihydroxyacetone phosphate (DHAP) to D-glyceraldehyde-3-phosphate (G3P).</text>
</comment>
<comment type="catalytic activity">
    <reaction evidence="1">
        <text>D-glyceraldehyde 3-phosphate = dihydroxyacetone phosphate</text>
        <dbReference type="Rhea" id="RHEA:18585"/>
        <dbReference type="ChEBI" id="CHEBI:57642"/>
        <dbReference type="ChEBI" id="CHEBI:59776"/>
        <dbReference type="EC" id="5.3.1.1"/>
    </reaction>
</comment>
<comment type="pathway">
    <text evidence="1">Carbohydrate biosynthesis; gluconeogenesis.</text>
</comment>
<comment type="pathway">
    <text evidence="1">Carbohydrate degradation; glycolysis; D-glyceraldehyde 3-phosphate from glycerone phosphate: step 1/1.</text>
</comment>
<comment type="subunit">
    <text evidence="1">Homodimer.</text>
</comment>
<comment type="subcellular location">
    <subcellularLocation>
        <location evidence="1">Cytoplasm</location>
    </subcellularLocation>
</comment>
<comment type="similarity">
    <text evidence="1">Belongs to the triosephosphate isomerase family.</text>
</comment>
<feature type="chain" id="PRO_0000307483" description="Triosephosphate isomerase">
    <location>
        <begin position="1"/>
        <end position="252"/>
    </location>
</feature>
<feature type="active site" description="Electrophile" evidence="1">
    <location>
        <position position="96"/>
    </location>
</feature>
<feature type="active site" description="Proton acceptor" evidence="1">
    <location>
        <position position="168"/>
    </location>
</feature>
<feature type="binding site" evidence="1">
    <location>
        <begin position="10"/>
        <end position="12"/>
    </location>
    <ligand>
        <name>substrate</name>
    </ligand>
</feature>
<feature type="binding site" evidence="1">
    <location>
        <position position="174"/>
    </location>
    <ligand>
        <name>substrate</name>
    </ligand>
</feature>
<feature type="binding site" evidence="1">
    <location>
        <position position="214"/>
    </location>
    <ligand>
        <name>substrate</name>
    </ligand>
</feature>
<feature type="binding site" evidence="1">
    <location>
        <begin position="235"/>
        <end position="236"/>
    </location>
    <ligand>
        <name>substrate</name>
    </ligand>
</feature>
<proteinExistence type="inferred from homology"/>